<comment type="function">
    <text evidence="1">Negative regulator of FtsZ ring formation; modulates the frequency and position of FtsZ ring formation. Inhibits FtsZ ring formation at polar sites. Interacts either with FtsZ or with one of its binding partners to promote depolymerization.</text>
</comment>
<comment type="subcellular location">
    <subcellularLocation>
        <location evidence="1">Cell membrane</location>
        <topology evidence="1">Single-pass membrane protein</topology>
    </subcellularLocation>
    <text evidence="1">Colocalized with FtsZ to the nascent septal site.</text>
</comment>
<comment type="similarity">
    <text evidence="1">Belongs to the EzrA family.</text>
</comment>
<organism>
    <name type="scientific">Staphylococcus aureus (strain USA300)</name>
    <dbReference type="NCBI Taxonomy" id="367830"/>
    <lineage>
        <taxon>Bacteria</taxon>
        <taxon>Bacillati</taxon>
        <taxon>Bacillota</taxon>
        <taxon>Bacilli</taxon>
        <taxon>Bacillales</taxon>
        <taxon>Staphylococcaceae</taxon>
        <taxon>Staphylococcus</taxon>
    </lineage>
</organism>
<protein>
    <recommendedName>
        <fullName evidence="1">Septation ring formation regulator EzrA</fullName>
    </recommendedName>
</protein>
<feature type="chain" id="PRO_1000045902" description="Septation ring formation regulator EzrA">
    <location>
        <begin position="1"/>
        <end position="564"/>
    </location>
</feature>
<feature type="topological domain" description="Extracellular" evidence="1">
    <location>
        <begin position="1"/>
        <end position="4"/>
    </location>
</feature>
<feature type="transmembrane region" description="Helical" evidence="1">
    <location>
        <begin position="5"/>
        <end position="23"/>
    </location>
</feature>
<feature type="topological domain" description="Cytoplasmic" evidence="1">
    <location>
        <begin position="24"/>
        <end position="564"/>
    </location>
</feature>
<feature type="coiled-coil region" evidence="1">
    <location>
        <begin position="99"/>
        <end position="138"/>
    </location>
</feature>
<feature type="coiled-coil region" evidence="1">
    <location>
        <begin position="190"/>
        <end position="223"/>
    </location>
</feature>
<feature type="coiled-coil region" evidence="1">
    <location>
        <begin position="271"/>
        <end position="300"/>
    </location>
</feature>
<feature type="coiled-coil region" evidence="1">
    <location>
        <begin position="350"/>
        <end position="435"/>
    </location>
</feature>
<feature type="coiled-coil region" evidence="1">
    <location>
        <begin position="471"/>
        <end position="550"/>
    </location>
</feature>
<dbReference type="EMBL" id="CP000255">
    <property type="protein sequence ID" value="ABD21517.1"/>
    <property type="molecule type" value="Genomic_DNA"/>
</dbReference>
<dbReference type="RefSeq" id="WP_000244865.1">
    <property type="nucleotide sequence ID" value="NZ_CP027476.1"/>
</dbReference>
<dbReference type="SMR" id="Q2FG20"/>
<dbReference type="KEGG" id="saa:SAUSA300_1664"/>
<dbReference type="HOGENOM" id="CLU_034079_1_0_9"/>
<dbReference type="OMA" id="FRSQNHI"/>
<dbReference type="Proteomes" id="UP000001939">
    <property type="component" value="Chromosome"/>
</dbReference>
<dbReference type="GO" id="GO:0005886">
    <property type="term" value="C:plasma membrane"/>
    <property type="evidence" value="ECO:0007669"/>
    <property type="project" value="UniProtKB-SubCell"/>
</dbReference>
<dbReference type="GO" id="GO:0005940">
    <property type="term" value="C:septin ring"/>
    <property type="evidence" value="ECO:0007669"/>
    <property type="project" value="InterPro"/>
</dbReference>
<dbReference type="GO" id="GO:0000917">
    <property type="term" value="P:division septum assembly"/>
    <property type="evidence" value="ECO:0007669"/>
    <property type="project" value="UniProtKB-KW"/>
</dbReference>
<dbReference type="GO" id="GO:0000921">
    <property type="term" value="P:septin ring assembly"/>
    <property type="evidence" value="ECO:0007669"/>
    <property type="project" value="InterPro"/>
</dbReference>
<dbReference type="HAMAP" id="MF_00728">
    <property type="entry name" value="EzrA"/>
    <property type="match status" value="1"/>
</dbReference>
<dbReference type="InterPro" id="IPR010379">
    <property type="entry name" value="EzrA"/>
</dbReference>
<dbReference type="NCBIfam" id="NF003412">
    <property type="entry name" value="PRK04778.1-6"/>
    <property type="match status" value="1"/>
</dbReference>
<dbReference type="Pfam" id="PF06160">
    <property type="entry name" value="EzrA"/>
    <property type="match status" value="1"/>
</dbReference>
<sequence length="564" mass="66200">MVLYIILAIIVIILIAVGVLFYLRSNKRQIIEKAIERKNEIETLPFDQNLAQLSKLNLKGETKTKYDAMKKDNVESTNKYLAPVEEKIHNAEALLDKFSFNASQSEIDDANELMDSYEQSYQQQLEDVNEIIALYKDNDELYDKCKVDYREMKRDVLANRHQFGEAASLLETEIEKFEPRLEQYEVLKADGNYVQAHNHIAALNEQMKQLRSYMEEIPELIRETQKELPGQFQDLKYGCRDLKVEGYDLDHVKVDSTLQSLKTELSFVEPLISRLELEEANDKLANINDKLDDMYDLIEHEVKAKNDVEETKDIITDNLFKAKDMNYTLQTEIEYVRENYYINESDAQSVRQFENEIQSLISVYDDILKEMSKSAVRYSEVQDNLQYLEDHVTVINDKQEKLQNHLIQLREDEAEAEDNLLRVQSKKEEVYRRLLASNLTSVPERFIIMKNEIDHEVRDVNEQFSERPIHVKQLKDKVSKIVIQMNTFEDEANDVLVNAVYAEKLIQYGNRYRKDYSNVDKSLNEAERLFKNNRYKRAIEIAEQALESVEPGVTKHIEEEVIKQ</sequence>
<gene>
    <name evidence="1" type="primary">ezrA</name>
    <name type="ordered locus">SAUSA300_1664</name>
</gene>
<evidence type="ECO:0000255" key="1">
    <source>
        <dbReference type="HAMAP-Rule" id="MF_00728"/>
    </source>
</evidence>
<reference key="1">
    <citation type="journal article" date="2006" name="Lancet">
        <title>Complete genome sequence of USA300, an epidemic clone of community-acquired meticillin-resistant Staphylococcus aureus.</title>
        <authorList>
            <person name="Diep B.A."/>
            <person name="Gill S.R."/>
            <person name="Chang R.F."/>
            <person name="Phan T.H."/>
            <person name="Chen J.H."/>
            <person name="Davidson M.G."/>
            <person name="Lin F."/>
            <person name="Lin J."/>
            <person name="Carleton H.A."/>
            <person name="Mongodin E.F."/>
            <person name="Sensabaugh G.F."/>
            <person name="Perdreau-Remington F."/>
        </authorList>
    </citation>
    <scope>NUCLEOTIDE SEQUENCE [LARGE SCALE GENOMIC DNA]</scope>
    <source>
        <strain>USA300</strain>
    </source>
</reference>
<proteinExistence type="inferred from homology"/>
<name>EZRA_STAA3</name>
<accession>Q2FG20</accession>
<keyword id="KW-0131">Cell cycle</keyword>
<keyword id="KW-0132">Cell division</keyword>
<keyword id="KW-1003">Cell membrane</keyword>
<keyword id="KW-0175">Coiled coil</keyword>
<keyword id="KW-0472">Membrane</keyword>
<keyword id="KW-0717">Septation</keyword>
<keyword id="KW-0812">Transmembrane</keyword>
<keyword id="KW-1133">Transmembrane helix</keyword>